<name>GLGA_ECOL6</name>
<sequence>MQVLHVCSEMFPLLKTGGLADVIGALPAAQIADGVDARVLLPAFPDIRRGVTDAQVVSRRDTFAGHITLLFGHYNGVGIYLIDAPHLYDRPGSPYHDTNLFAYTDNVLRFALLGWVGAEMASGLDPFWRPDVVHAHDWHAGLAPAYLAARGRPAKSVFTVHNLAYQGMFYAHHMNDIQLPWSFFNIHGLEFNGQISFLKAGLYYADHITAVSPTYAREITEPQFAYGMEGLLQQRHREGRLSGVLNGVDEKIWSPETDLLLASRYTRDTLEDKAENKRQLQIAMGLKVDDKVPLFAVVSRLTSQKGLDLVLEALPGLLEQGGQLALLGAGDPVLQEGFLAAAAEYPGQVGVQIGYHEAFSHRIMGGADVILVPSRFEPCGLTQLYGLKYGTLPLVRRTGGLADTVSDCSLENLADGVASGFVFEDSNAWSLLRAIRRAFVLWSRPSLWRFVQRQAMAMDFSWQVAAKSYRELYYRLK</sequence>
<dbReference type="EC" id="2.4.1.21"/>
<dbReference type="EMBL" id="AE014075">
    <property type="protein sequence ID" value="AAN82654.1"/>
    <property type="molecule type" value="Genomic_DNA"/>
</dbReference>
<dbReference type="RefSeq" id="WP_001197646.1">
    <property type="nucleotide sequence ID" value="NZ_CP051263.1"/>
</dbReference>
<dbReference type="SMR" id="P0A6U9"/>
<dbReference type="STRING" id="199310.c4216"/>
<dbReference type="CAZy" id="GT5">
    <property type="family name" value="Glycosyltransferase Family 5"/>
</dbReference>
<dbReference type="GeneID" id="75202274"/>
<dbReference type="KEGG" id="ecc:c4216"/>
<dbReference type="eggNOG" id="COG0297">
    <property type="taxonomic scope" value="Bacteria"/>
</dbReference>
<dbReference type="HOGENOM" id="CLU_009583_18_2_6"/>
<dbReference type="BioCyc" id="ECOL199310:C4216-MONOMER"/>
<dbReference type="UniPathway" id="UPA00164"/>
<dbReference type="Proteomes" id="UP000001410">
    <property type="component" value="Chromosome"/>
</dbReference>
<dbReference type="GO" id="GO:0005829">
    <property type="term" value="C:cytosol"/>
    <property type="evidence" value="ECO:0007669"/>
    <property type="project" value="TreeGrafter"/>
</dbReference>
<dbReference type="GO" id="GO:0009011">
    <property type="term" value="F:alpha-1,4-glucan glucosyltransferase (ADP-glucose donor) activity"/>
    <property type="evidence" value="ECO:0007669"/>
    <property type="project" value="UniProtKB-UniRule"/>
</dbReference>
<dbReference type="GO" id="GO:0004373">
    <property type="term" value="F:alpha-1,4-glucan glucosyltransferase (UDP-glucose donor) activity"/>
    <property type="evidence" value="ECO:0007669"/>
    <property type="project" value="InterPro"/>
</dbReference>
<dbReference type="GO" id="GO:0005978">
    <property type="term" value="P:glycogen biosynthetic process"/>
    <property type="evidence" value="ECO:0007669"/>
    <property type="project" value="UniProtKB-UniRule"/>
</dbReference>
<dbReference type="CDD" id="cd03791">
    <property type="entry name" value="GT5_Glycogen_synthase_DULL1-like"/>
    <property type="match status" value="1"/>
</dbReference>
<dbReference type="FunFam" id="3.40.50.2000:FF:000008">
    <property type="entry name" value="Glycogen synthase"/>
    <property type="match status" value="1"/>
</dbReference>
<dbReference type="FunFam" id="3.40.50.2000:FF:000011">
    <property type="entry name" value="Glycogen synthase"/>
    <property type="match status" value="1"/>
</dbReference>
<dbReference type="Gene3D" id="3.40.50.2000">
    <property type="entry name" value="Glycogen Phosphorylase B"/>
    <property type="match status" value="2"/>
</dbReference>
<dbReference type="HAMAP" id="MF_00484">
    <property type="entry name" value="Glycogen_synth"/>
    <property type="match status" value="1"/>
</dbReference>
<dbReference type="InterPro" id="IPR001296">
    <property type="entry name" value="Glyco_trans_1"/>
</dbReference>
<dbReference type="InterPro" id="IPR011835">
    <property type="entry name" value="GS/SS"/>
</dbReference>
<dbReference type="InterPro" id="IPR013534">
    <property type="entry name" value="Starch_synth_cat_dom"/>
</dbReference>
<dbReference type="NCBIfam" id="TIGR02095">
    <property type="entry name" value="glgA"/>
    <property type="match status" value="1"/>
</dbReference>
<dbReference type="NCBIfam" id="NF001899">
    <property type="entry name" value="PRK00654.1-2"/>
    <property type="match status" value="1"/>
</dbReference>
<dbReference type="PANTHER" id="PTHR45825:SF11">
    <property type="entry name" value="ALPHA AMYLASE DOMAIN-CONTAINING PROTEIN"/>
    <property type="match status" value="1"/>
</dbReference>
<dbReference type="PANTHER" id="PTHR45825">
    <property type="entry name" value="GRANULE-BOUND STARCH SYNTHASE 1, CHLOROPLASTIC/AMYLOPLASTIC"/>
    <property type="match status" value="1"/>
</dbReference>
<dbReference type="Pfam" id="PF08323">
    <property type="entry name" value="Glyco_transf_5"/>
    <property type="match status" value="1"/>
</dbReference>
<dbReference type="Pfam" id="PF00534">
    <property type="entry name" value="Glycos_transf_1"/>
    <property type="match status" value="1"/>
</dbReference>
<dbReference type="SUPFAM" id="SSF53756">
    <property type="entry name" value="UDP-Glycosyltransferase/glycogen phosphorylase"/>
    <property type="match status" value="1"/>
</dbReference>
<protein>
    <recommendedName>
        <fullName>Glycogen synthase</fullName>
        <ecNumber>2.4.1.21</ecNumber>
    </recommendedName>
    <alternativeName>
        <fullName>Starch [bacterial glycogen] synthase</fullName>
    </alternativeName>
</protein>
<keyword id="KW-0320">Glycogen biosynthesis</keyword>
<keyword id="KW-0328">Glycosyltransferase</keyword>
<keyword id="KW-1185">Reference proteome</keyword>
<keyword id="KW-0808">Transferase</keyword>
<organism>
    <name type="scientific">Escherichia coli O6:H1 (strain CFT073 / ATCC 700928 / UPEC)</name>
    <dbReference type="NCBI Taxonomy" id="199310"/>
    <lineage>
        <taxon>Bacteria</taxon>
        <taxon>Pseudomonadati</taxon>
        <taxon>Pseudomonadota</taxon>
        <taxon>Gammaproteobacteria</taxon>
        <taxon>Enterobacterales</taxon>
        <taxon>Enterobacteriaceae</taxon>
        <taxon>Escherichia</taxon>
    </lineage>
</organism>
<evidence type="ECO:0000250" key="1"/>
<evidence type="ECO:0000305" key="2"/>
<feature type="chain" id="PRO_0000188612" description="Glycogen synthase">
    <location>
        <begin position="1"/>
        <end position="477"/>
    </location>
</feature>
<feature type="binding site" evidence="1">
    <location>
        <position position="15"/>
    </location>
    <ligand>
        <name>ADP-alpha-D-glucose</name>
        <dbReference type="ChEBI" id="CHEBI:57498"/>
    </ligand>
</feature>
<accession>P0A6U9</accession>
<accession>P08323</accession>
<reference key="1">
    <citation type="journal article" date="2002" name="Proc. Natl. Acad. Sci. U.S.A.">
        <title>Extensive mosaic structure revealed by the complete genome sequence of uropathogenic Escherichia coli.</title>
        <authorList>
            <person name="Welch R.A."/>
            <person name="Burland V."/>
            <person name="Plunkett G. III"/>
            <person name="Redford P."/>
            <person name="Roesch P."/>
            <person name="Rasko D."/>
            <person name="Buckles E.L."/>
            <person name="Liou S.-R."/>
            <person name="Boutin A."/>
            <person name="Hackett J."/>
            <person name="Stroud D."/>
            <person name="Mayhew G.F."/>
            <person name="Rose D.J."/>
            <person name="Zhou S."/>
            <person name="Schwartz D.C."/>
            <person name="Perna N.T."/>
            <person name="Mobley H.L.T."/>
            <person name="Donnenberg M.S."/>
            <person name="Blattner F.R."/>
        </authorList>
    </citation>
    <scope>NUCLEOTIDE SEQUENCE [LARGE SCALE GENOMIC DNA]</scope>
    <source>
        <strain>CFT073 / ATCC 700928 / UPEC</strain>
    </source>
</reference>
<proteinExistence type="inferred from homology"/>
<gene>
    <name type="primary">glgA</name>
    <name type="ordered locus">c4216</name>
</gene>
<comment type="function">
    <text evidence="1">Synthesizes alpha-1,4-glucan chains using ADP-glucose.</text>
</comment>
<comment type="catalytic activity">
    <reaction>
        <text>[(1-&gt;4)-alpha-D-glucosyl](n) + ADP-alpha-D-glucose = [(1-&gt;4)-alpha-D-glucosyl](n+1) + ADP + H(+)</text>
        <dbReference type="Rhea" id="RHEA:18189"/>
        <dbReference type="Rhea" id="RHEA-COMP:9584"/>
        <dbReference type="Rhea" id="RHEA-COMP:9587"/>
        <dbReference type="ChEBI" id="CHEBI:15378"/>
        <dbReference type="ChEBI" id="CHEBI:15444"/>
        <dbReference type="ChEBI" id="CHEBI:57498"/>
        <dbReference type="ChEBI" id="CHEBI:456216"/>
        <dbReference type="EC" id="2.4.1.21"/>
    </reaction>
</comment>
<comment type="pathway">
    <text>Glycan biosynthesis; glycogen biosynthesis.</text>
</comment>
<comment type="similarity">
    <text evidence="2">Belongs to the glycosyltransferase 1 family. Bacterial/plant glycogen synthase subfamily.</text>
</comment>